<protein>
    <recommendedName>
        <fullName evidence="1">Ferredoxin--NADP reductase</fullName>
        <shortName evidence="1">FNR</shortName>
        <shortName evidence="1">Fd-NADP(+) reductase</shortName>
        <ecNumber evidence="1">1.18.1.2</ecNumber>
    </recommendedName>
</protein>
<dbReference type="EC" id="1.18.1.2" evidence="1"/>
<dbReference type="EMBL" id="BA000040">
    <property type="protein sequence ID" value="BAC51148.1"/>
    <property type="molecule type" value="Genomic_DNA"/>
</dbReference>
<dbReference type="RefSeq" id="NP_772523.1">
    <property type="nucleotide sequence ID" value="NC_004463.1"/>
</dbReference>
<dbReference type="RefSeq" id="WP_011088624.1">
    <property type="nucleotide sequence ID" value="NC_004463.1"/>
</dbReference>
<dbReference type="SMR" id="Q89HV6"/>
<dbReference type="STRING" id="224911.AAV28_26950"/>
<dbReference type="EnsemblBacteria" id="BAC51148">
    <property type="protein sequence ID" value="BAC51148"/>
    <property type="gene ID" value="BAC51148"/>
</dbReference>
<dbReference type="GeneID" id="46492880"/>
<dbReference type="KEGG" id="bja:bll5883"/>
<dbReference type="PATRIC" id="fig|224911.44.peg.5830"/>
<dbReference type="eggNOG" id="COG0492">
    <property type="taxonomic scope" value="Bacteria"/>
</dbReference>
<dbReference type="HOGENOM" id="CLU_031864_5_5_5"/>
<dbReference type="InParanoid" id="Q89HV6"/>
<dbReference type="OrthoDB" id="9806179at2"/>
<dbReference type="PhylomeDB" id="Q89HV6"/>
<dbReference type="Proteomes" id="UP000002526">
    <property type="component" value="Chromosome"/>
</dbReference>
<dbReference type="GO" id="GO:0004324">
    <property type="term" value="F:ferredoxin-NADP+ reductase activity"/>
    <property type="evidence" value="ECO:0007669"/>
    <property type="project" value="UniProtKB-UniRule"/>
</dbReference>
<dbReference type="GO" id="GO:0050660">
    <property type="term" value="F:flavin adenine dinucleotide binding"/>
    <property type="evidence" value="ECO:0007669"/>
    <property type="project" value="UniProtKB-UniRule"/>
</dbReference>
<dbReference type="GO" id="GO:0050661">
    <property type="term" value="F:NADP binding"/>
    <property type="evidence" value="ECO:0007669"/>
    <property type="project" value="UniProtKB-UniRule"/>
</dbReference>
<dbReference type="GO" id="GO:0004791">
    <property type="term" value="F:thioredoxin-disulfide reductase (NADPH) activity"/>
    <property type="evidence" value="ECO:0000318"/>
    <property type="project" value="GO_Central"/>
</dbReference>
<dbReference type="GO" id="GO:0045454">
    <property type="term" value="P:cell redox homeostasis"/>
    <property type="evidence" value="ECO:0000318"/>
    <property type="project" value="GO_Central"/>
</dbReference>
<dbReference type="Gene3D" id="3.50.50.60">
    <property type="entry name" value="FAD/NAD(P)-binding domain"/>
    <property type="match status" value="2"/>
</dbReference>
<dbReference type="HAMAP" id="MF_01685">
    <property type="entry name" value="FENR2"/>
    <property type="match status" value="1"/>
</dbReference>
<dbReference type="InterPro" id="IPR036188">
    <property type="entry name" value="FAD/NAD-bd_sf"/>
</dbReference>
<dbReference type="InterPro" id="IPR023753">
    <property type="entry name" value="FAD/NAD-binding_dom"/>
</dbReference>
<dbReference type="InterPro" id="IPR022890">
    <property type="entry name" value="Fd--NADP_Rdtase_type_2"/>
</dbReference>
<dbReference type="InterPro" id="IPR050097">
    <property type="entry name" value="Ferredoxin-NADP_redctase_2"/>
</dbReference>
<dbReference type="PANTHER" id="PTHR48105">
    <property type="entry name" value="THIOREDOXIN REDUCTASE 1-RELATED-RELATED"/>
    <property type="match status" value="1"/>
</dbReference>
<dbReference type="Pfam" id="PF07992">
    <property type="entry name" value="Pyr_redox_2"/>
    <property type="match status" value="1"/>
</dbReference>
<dbReference type="PRINTS" id="PR00368">
    <property type="entry name" value="FADPNR"/>
</dbReference>
<dbReference type="PRINTS" id="PR00469">
    <property type="entry name" value="PNDRDTASEII"/>
</dbReference>
<dbReference type="SUPFAM" id="SSF51905">
    <property type="entry name" value="FAD/NAD(P)-binding domain"/>
    <property type="match status" value="1"/>
</dbReference>
<keyword id="KW-0274">FAD</keyword>
<keyword id="KW-0285">Flavoprotein</keyword>
<keyword id="KW-0521">NADP</keyword>
<keyword id="KW-0560">Oxidoreductase</keyword>
<keyword id="KW-1185">Reference proteome</keyword>
<evidence type="ECO:0000255" key="1">
    <source>
        <dbReference type="HAMAP-Rule" id="MF_01685"/>
    </source>
</evidence>
<gene>
    <name type="ordered locus">bll5883</name>
</gene>
<organism>
    <name type="scientific">Bradyrhizobium diazoefficiens (strain JCM 10833 / BCRC 13528 / IAM 13628 / NBRC 14792 / USDA 110)</name>
    <dbReference type="NCBI Taxonomy" id="224911"/>
    <lineage>
        <taxon>Bacteria</taxon>
        <taxon>Pseudomonadati</taxon>
        <taxon>Pseudomonadota</taxon>
        <taxon>Alphaproteobacteria</taxon>
        <taxon>Hyphomicrobiales</taxon>
        <taxon>Nitrobacteraceae</taxon>
        <taxon>Bradyrhizobium</taxon>
    </lineage>
</organism>
<feature type="chain" id="PRO_0000364809" description="Ferredoxin--NADP reductase">
    <location>
        <begin position="1"/>
        <end position="342"/>
    </location>
</feature>
<feature type="binding site" evidence="1">
    <location>
        <position position="17"/>
    </location>
    <ligand>
        <name>FAD</name>
        <dbReference type="ChEBI" id="CHEBI:57692"/>
    </ligand>
</feature>
<feature type="binding site" evidence="1">
    <location>
        <position position="36"/>
    </location>
    <ligand>
        <name>FAD</name>
        <dbReference type="ChEBI" id="CHEBI:57692"/>
    </ligand>
</feature>
<feature type="binding site" evidence="1">
    <location>
        <position position="44"/>
    </location>
    <ligand>
        <name>FAD</name>
        <dbReference type="ChEBI" id="CHEBI:57692"/>
    </ligand>
</feature>
<feature type="binding site" evidence="1">
    <location>
        <position position="49"/>
    </location>
    <ligand>
        <name>FAD</name>
        <dbReference type="ChEBI" id="CHEBI:57692"/>
    </ligand>
</feature>
<feature type="binding site" evidence="1">
    <location>
        <position position="89"/>
    </location>
    <ligand>
        <name>FAD</name>
        <dbReference type="ChEBI" id="CHEBI:57692"/>
    </ligand>
</feature>
<feature type="binding site" evidence="1">
    <location>
        <position position="124"/>
    </location>
    <ligand>
        <name>FAD</name>
        <dbReference type="ChEBI" id="CHEBI:57692"/>
    </ligand>
</feature>
<feature type="binding site" evidence="1">
    <location>
        <position position="289"/>
    </location>
    <ligand>
        <name>FAD</name>
        <dbReference type="ChEBI" id="CHEBI:57692"/>
    </ligand>
</feature>
<feature type="binding site" evidence="1">
    <location>
        <position position="330"/>
    </location>
    <ligand>
        <name>FAD</name>
        <dbReference type="ChEBI" id="CHEBI:57692"/>
    </ligand>
</feature>
<name>FENR_BRADU</name>
<comment type="catalytic activity">
    <reaction evidence="1">
        <text>2 reduced [2Fe-2S]-[ferredoxin] + NADP(+) + H(+) = 2 oxidized [2Fe-2S]-[ferredoxin] + NADPH</text>
        <dbReference type="Rhea" id="RHEA:20125"/>
        <dbReference type="Rhea" id="RHEA-COMP:10000"/>
        <dbReference type="Rhea" id="RHEA-COMP:10001"/>
        <dbReference type="ChEBI" id="CHEBI:15378"/>
        <dbReference type="ChEBI" id="CHEBI:33737"/>
        <dbReference type="ChEBI" id="CHEBI:33738"/>
        <dbReference type="ChEBI" id="CHEBI:57783"/>
        <dbReference type="ChEBI" id="CHEBI:58349"/>
        <dbReference type="EC" id="1.18.1.2"/>
    </reaction>
</comment>
<comment type="cofactor">
    <cofactor evidence="1">
        <name>FAD</name>
        <dbReference type="ChEBI" id="CHEBI:57692"/>
    </cofactor>
    <text evidence="1">Binds 1 FAD per subunit.</text>
</comment>
<comment type="subunit">
    <text evidence="1">Homodimer.</text>
</comment>
<comment type="similarity">
    <text evidence="1">Belongs to the ferredoxin--NADP reductase type 2 family.</text>
</comment>
<accession>Q89HV6</accession>
<reference key="1">
    <citation type="journal article" date="2002" name="DNA Res.">
        <title>Complete genomic sequence of nitrogen-fixing symbiotic bacterium Bradyrhizobium japonicum USDA110.</title>
        <authorList>
            <person name="Kaneko T."/>
            <person name="Nakamura Y."/>
            <person name="Sato S."/>
            <person name="Minamisawa K."/>
            <person name="Uchiumi T."/>
            <person name="Sasamoto S."/>
            <person name="Watanabe A."/>
            <person name="Idesawa K."/>
            <person name="Iriguchi M."/>
            <person name="Kawashima K."/>
            <person name="Kohara M."/>
            <person name="Matsumoto M."/>
            <person name="Shimpo S."/>
            <person name="Tsuruoka H."/>
            <person name="Wada T."/>
            <person name="Yamada M."/>
            <person name="Tabata S."/>
        </authorList>
    </citation>
    <scope>NUCLEOTIDE SEQUENCE [LARGE SCALE GENOMIC DNA]</scope>
    <source>
        <strain>JCM 10833 / BCRC 13528 / IAM 13628 / NBRC 14792 / USDA 110</strain>
    </source>
</reference>
<proteinExistence type="inferred from homology"/>
<sequence>MSDVIKTDVLIIGAGPCGLFAAFELGLLDMKAHFVDILDKVGGQCAELYPEKPIYDIPGIPHVSGQGLTDALMEQIKPFHPTFHLGEMVETVEKIGDPAFRCTTDAGKVFECKVLVIAAGGGSFQPKRPPVPGIEAYEGTSVHYAVRKMETFRDKNVLIVGGGDSALDWTLNLHPVAKRITLLHRRDEFRAAPHSVEQMRALVAAGKMDLRLGQVTSLAGTDGKLTGATIKGNDNNVTEIACDAMLPFFGLTMKLGPVANWGIALENNLVPVETSAFETNISGIFAIGDINTYPGKIKLILCGFHEGALMSQKAHRYVYPEKRLVFQYTTSSSSLQKKLGVS</sequence>